<organism>
    <name type="scientific">Stigeoclonium helveticum</name>
    <name type="common">Green alga</name>
    <dbReference type="NCBI Taxonomy" id="55999"/>
    <lineage>
        <taxon>Eukaryota</taxon>
        <taxon>Viridiplantae</taxon>
        <taxon>Chlorophyta</taxon>
        <taxon>core chlorophytes</taxon>
        <taxon>Chlorophyceae</taxon>
        <taxon>OCC clade</taxon>
        <taxon>Chaetophorales</taxon>
        <taxon>Chaetophoraceae</taxon>
        <taxon>Stigeoclonium</taxon>
    </lineage>
</organism>
<reference key="1">
    <citation type="journal article" date="2006" name="Mol. Genet. Genomics">
        <title>Distinctive architecture of the chloroplast genome in the chlorophycean green alga Stigeoclonium helveticum.</title>
        <authorList>
            <person name="Belanger A.-S."/>
            <person name="Brouard J.-S."/>
            <person name="Charlebois P."/>
            <person name="Otis C."/>
            <person name="Lemieux C."/>
            <person name="Turmel M."/>
        </authorList>
    </citation>
    <scope>NUCLEOTIDE SEQUENCE [LARGE SCALE GENOMIC DNA]</scope>
    <source>
        <strain>UTEX 441</strain>
    </source>
</reference>
<name>RR19_STIHE</name>
<feature type="chain" id="PRO_0000276928" description="Small ribosomal subunit protein uS19c">
    <location>
        <begin position="1"/>
        <end position="93"/>
    </location>
</feature>
<dbReference type="EMBL" id="DQ630521">
    <property type="protein sequence ID" value="ABF60195.1"/>
    <property type="molecule type" value="Genomic_DNA"/>
</dbReference>
<dbReference type="RefSeq" id="YP_764371.1">
    <property type="nucleotide sequence ID" value="NC_008372.1"/>
</dbReference>
<dbReference type="SMR" id="Q06SJ5"/>
<dbReference type="GeneID" id="4308375"/>
<dbReference type="GO" id="GO:0009507">
    <property type="term" value="C:chloroplast"/>
    <property type="evidence" value="ECO:0007669"/>
    <property type="project" value="UniProtKB-SubCell"/>
</dbReference>
<dbReference type="GO" id="GO:0005763">
    <property type="term" value="C:mitochondrial small ribosomal subunit"/>
    <property type="evidence" value="ECO:0007669"/>
    <property type="project" value="TreeGrafter"/>
</dbReference>
<dbReference type="GO" id="GO:0019843">
    <property type="term" value="F:rRNA binding"/>
    <property type="evidence" value="ECO:0007669"/>
    <property type="project" value="UniProtKB-UniRule"/>
</dbReference>
<dbReference type="GO" id="GO:0003735">
    <property type="term" value="F:structural constituent of ribosome"/>
    <property type="evidence" value="ECO:0007669"/>
    <property type="project" value="InterPro"/>
</dbReference>
<dbReference type="GO" id="GO:0000028">
    <property type="term" value="P:ribosomal small subunit assembly"/>
    <property type="evidence" value="ECO:0007669"/>
    <property type="project" value="TreeGrafter"/>
</dbReference>
<dbReference type="GO" id="GO:0006412">
    <property type="term" value="P:translation"/>
    <property type="evidence" value="ECO:0007669"/>
    <property type="project" value="UniProtKB-UniRule"/>
</dbReference>
<dbReference type="FunFam" id="3.30.860.10:FF:000001">
    <property type="entry name" value="30S ribosomal protein S19"/>
    <property type="match status" value="1"/>
</dbReference>
<dbReference type="Gene3D" id="3.30.860.10">
    <property type="entry name" value="30s Ribosomal Protein S19, Chain A"/>
    <property type="match status" value="1"/>
</dbReference>
<dbReference type="HAMAP" id="MF_00531">
    <property type="entry name" value="Ribosomal_uS19"/>
    <property type="match status" value="1"/>
</dbReference>
<dbReference type="InterPro" id="IPR002222">
    <property type="entry name" value="Ribosomal_uS19"/>
</dbReference>
<dbReference type="InterPro" id="IPR005732">
    <property type="entry name" value="Ribosomal_uS19_bac-type"/>
</dbReference>
<dbReference type="InterPro" id="IPR020934">
    <property type="entry name" value="Ribosomal_uS19_CS"/>
</dbReference>
<dbReference type="InterPro" id="IPR023575">
    <property type="entry name" value="Ribosomal_uS19_SF"/>
</dbReference>
<dbReference type="NCBIfam" id="TIGR01050">
    <property type="entry name" value="rpsS_bact"/>
    <property type="match status" value="1"/>
</dbReference>
<dbReference type="PANTHER" id="PTHR11880">
    <property type="entry name" value="RIBOSOMAL PROTEIN S19P FAMILY MEMBER"/>
    <property type="match status" value="1"/>
</dbReference>
<dbReference type="PANTHER" id="PTHR11880:SF8">
    <property type="entry name" value="SMALL RIBOSOMAL SUBUNIT PROTEIN US19M"/>
    <property type="match status" value="1"/>
</dbReference>
<dbReference type="Pfam" id="PF00203">
    <property type="entry name" value="Ribosomal_S19"/>
    <property type="match status" value="1"/>
</dbReference>
<dbReference type="PIRSF" id="PIRSF002144">
    <property type="entry name" value="Ribosomal_S19"/>
    <property type="match status" value="1"/>
</dbReference>
<dbReference type="PRINTS" id="PR00975">
    <property type="entry name" value="RIBOSOMALS19"/>
</dbReference>
<dbReference type="SUPFAM" id="SSF54570">
    <property type="entry name" value="Ribosomal protein S19"/>
    <property type="match status" value="1"/>
</dbReference>
<dbReference type="PROSITE" id="PS00323">
    <property type="entry name" value="RIBOSOMAL_S19"/>
    <property type="match status" value="1"/>
</dbReference>
<accession>Q06SJ5</accession>
<sequence>MSRSLKKGPFVADHLLKKIEKLNIKGIQKVIVTWSRSSTIVPIMIGHTVAVHNGREHIPVFITDKMVGHKLGEFALTRTFKTHTKKVNKKTKR</sequence>
<protein>
    <recommendedName>
        <fullName evidence="1">Small ribosomal subunit protein uS19c</fullName>
    </recommendedName>
    <alternativeName>
        <fullName evidence="2">30S ribosomal protein S19, chloroplastic</fullName>
    </alternativeName>
</protein>
<comment type="function">
    <text evidence="1">Protein S19 forms a complex with S13 that binds strongly to the 16S ribosomal RNA.</text>
</comment>
<comment type="subcellular location">
    <subcellularLocation>
        <location>Plastid</location>
        <location>Chloroplast</location>
    </subcellularLocation>
</comment>
<comment type="similarity">
    <text evidence="1">Belongs to the universal ribosomal protein uS19 family.</text>
</comment>
<proteinExistence type="inferred from homology"/>
<geneLocation type="chloroplast"/>
<keyword id="KW-0150">Chloroplast</keyword>
<keyword id="KW-0934">Plastid</keyword>
<keyword id="KW-0687">Ribonucleoprotein</keyword>
<keyword id="KW-0689">Ribosomal protein</keyword>
<keyword id="KW-0694">RNA-binding</keyword>
<keyword id="KW-0699">rRNA-binding</keyword>
<evidence type="ECO:0000255" key="1">
    <source>
        <dbReference type="HAMAP-Rule" id="MF_00531"/>
    </source>
</evidence>
<evidence type="ECO:0000305" key="2"/>
<gene>
    <name evidence="1" type="primary">rps19</name>
</gene>